<organism>
    <name type="scientific">Ajellomyces dermatitidis (strain ER-3 / ATCC MYA-2586)</name>
    <name type="common">Blastomyces dermatitidis</name>
    <dbReference type="NCBI Taxonomy" id="559297"/>
    <lineage>
        <taxon>Eukaryota</taxon>
        <taxon>Fungi</taxon>
        <taxon>Dikarya</taxon>
        <taxon>Ascomycota</taxon>
        <taxon>Pezizomycotina</taxon>
        <taxon>Eurotiomycetes</taxon>
        <taxon>Eurotiomycetidae</taxon>
        <taxon>Onygenales</taxon>
        <taxon>Ajellomycetaceae</taxon>
        <taxon>Blastomyces</taxon>
    </lineage>
</organism>
<gene>
    <name evidence="1" type="primary">CYN1</name>
    <name type="ORF">BDCG_01247</name>
</gene>
<name>CYNS_AJEDR</name>
<accession>C5G6H8</accession>
<protein>
    <recommendedName>
        <fullName evidence="1">Cyanate hydratase</fullName>
        <shortName evidence="1">Cyanase</shortName>
        <ecNumber evidence="1">4.2.1.104</ecNumber>
    </recommendedName>
    <alternativeName>
        <fullName evidence="1">Cyanate hydrolase</fullName>
    </alternativeName>
    <alternativeName>
        <fullName evidence="1">Cyanate lyase</fullName>
    </alternativeName>
</protein>
<feature type="chain" id="PRO_0000403237" description="Cyanate hydratase">
    <location>
        <begin position="1"/>
        <end position="163"/>
    </location>
</feature>
<feature type="active site" evidence="1">
    <location>
        <position position="103"/>
    </location>
</feature>
<feature type="active site" evidence="1">
    <location>
        <position position="106"/>
    </location>
</feature>
<feature type="active site" evidence="1">
    <location>
        <position position="129"/>
    </location>
</feature>
<dbReference type="EC" id="4.2.1.104" evidence="1"/>
<dbReference type="EMBL" id="EQ999973">
    <property type="protein sequence ID" value="EEQ84442.2"/>
    <property type="molecule type" value="Genomic_DNA"/>
</dbReference>
<dbReference type="SMR" id="C5G6H8"/>
<dbReference type="STRING" id="559297.C5G6H8"/>
<dbReference type="eggNOG" id="ENOG502S3YJ">
    <property type="taxonomic scope" value="Eukaryota"/>
</dbReference>
<dbReference type="HOGENOM" id="CLU_103452_0_0_1"/>
<dbReference type="OMA" id="YELVMIN"/>
<dbReference type="GO" id="GO:0008824">
    <property type="term" value="F:cyanate hydratase activity"/>
    <property type="evidence" value="ECO:0007669"/>
    <property type="project" value="UniProtKB-UniRule"/>
</dbReference>
<dbReference type="GO" id="GO:0003677">
    <property type="term" value="F:DNA binding"/>
    <property type="evidence" value="ECO:0007669"/>
    <property type="project" value="InterPro"/>
</dbReference>
<dbReference type="GO" id="GO:0009439">
    <property type="term" value="P:cyanate metabolic process"/>
    <property type="evidence" value="ECO:0007669"/>
    <property type="project" value="UniProtKB-UniRule"/>
</dbReference>
<dbReference type="CDD" id="cd00559">
    <property type="entry name" value="Cyanase_C"/>
    <property type="match status" value="1"/>
</dbReference>
<dbReference type="Gene3D" id="3.30.1160.10">
    <property type="entry name" value="Cyanate lyase, C-terminal domain"/>
    <property type="match status" value="1"/>
</dbReference>
<dbReference type="Gene3D" id="1.10.260.40">
    <property type="entry name" value="lambda repressor-like DNA-binding domains"/>
    <property type="match status" value="1"/>
</dbReference>
<dbReference type="HAMAP" id="MF_00535">
    <property type="entry name" value="Cyanate_hydrat"/>
    <property type="match status" value="1"/>
</dbReference>
<dbReference type="InterPro" id="IPR008076">
    <property type="entry name" value="Cyanase"/>
</dbReference>
<dbReference type="InterPro" id="IPR003712">
    <property type="entry name" value="Cyanate_lyase_C"/>
</dbReference>
<dbReference type="InterPro" id="IPR036581">
    <property type="entry name" value="Cyanate_lyase_C_sf"/>
</dbReference>
<dbReference type="InterPro" id="IPR010982">
    <property type="entry name" value="Lambda_DNA-bd_dom_sf"/>
</dbReference>
<dbReference type="NCBIfam" id="TIGR00673">
    <property type="entry name" value="cynS"/>
    <property type="match status" value="1"/>
</dbReference>
<dbReference type="PANTHER" id="PTHR34186">
    <property type="entry name" value="CYANATE HYDRATASE"/>
    <property type="match status" value="1"/>
</dbReference>
<dbReference type="PANTHER" id="PTHR34186:SF2">
    <property type="entry name" value="CYANATE HYDRATASE"/>
    <property type="match status" value="1"/>
</dbReference>
<dbReference type="Pfam" id="PF02560">
    <property type="entry name" value="Cyanate_lyase"/>
    <property type="match status" value="1"/>
</dbReference>
<dbReference type="PIRSF" id="PIRSF001263">
    <property type="entry name" value="Cyanate_hydratas"/>
    <property type="match status" value="1"/>
</dbReference>
<dbReference type="PRINTS" id="PR01693">
    <property type="entry name" value="CYANASE"/>
</dbReference>
<dbReference type="SMART" id="SM01116">
    <property type="entry name" value="Cyanate_lyase"/>
    <property type="match status" value="1"/>
</dbReference>
<dbReference type="SUPFAM" id="SSF55234">
    <property type="entry name" value="Cyanase C-terminal domain"/>
    <property type="match status" value="1"/>
</dbReference>
<dbReference type="SUPFAM" id="SSF47413">
    <property type="entry name" value="lambda repressor-like DNA-binding domains"/>
    <property type="match status" value="1"/>
</dbReference>
<evidence type="ECO:0000255" key="1">
    <source>
        <dbReference type="HAMAP-Rule" id="MF_03139"/>
    </source>
</evidence>
<comment type="function">
    <text evidence="1">Catalyzes the reaction of cyanate with bicarbonate to produce ammonia and carbon dioxide.</text>
</comment>
<comment type="catalytic activity">
    <reaction evidence="1">
        <text>cyanate + hydrogencarbonate + 3 H(+) = NH4(+) + 2 CO2</text>
        <dbReference type="Rhea" id="RHEA:11120"/>
        <dbReference type="ChEBI" id="CHEBI:15378"/>
        <dbReference type="ChEBI" id="CHEBI:16526"/>
        <dbReference type="ChEBI" id="CHEBI:17544"/>
        <dbReference type="ChEBI" id="CHEBI:28938"/>
        <dbReference type="ChEBI" id="CHEBI:29195"/>
        <dbReference type="EC" id="4.2.1.104"/>
    </reaction>
</comment>
<comment type="similarity">
    <text evidence="1">Belongs to the cyanase family.</text>
</comment>
<reference key="1">
    <citation type="journal article" date="2015" name="PLoS Genet.">
        <title>The dynamic genome and transcriptome of the human fungal pathogen Blastomyces and close relative Emmonsia.</title>
        <authorList>
            <person name="Munoz J.F."/>
            <person name="Gauthier G.M."/>
            <person name="Desjardins C.A."/>
            <person name="Gallo J.E."/>
            <person name="Holder J."/>
            <person name="Sullivan T.D."/>
            <person name="Marty A.J."/>
            <person name="Carmen J.C."/>
            <person name="Chen Z."/>
            <person name="Ding L."/>
            <person name="Gujja S."/>
            <person name="Magrini V."/>
            <person name="Misas E."/>
            <person name="Mitreva M."/>
            <person name="Priest M."/>
            <person name="Saif S."/>
            <person name="Whiston E.A."/>
            <person name="Young S."/>
            <person name="Zeng Q."/>
            <person name="Goldman W.E."/>
            <person name="Mardis E.R."/>
            <person name="Taylor J.W."/>
            <person name="McEwen J.G."/>
            <person name="Clay O.K."/>
            <person name="Klein B.S."/>
            <person name="Cuomo C.A."/>
        </authorList>
    </citation>
    <scope>NUCLEOTIDE SEQUENCE [LARGE SCALE GENOMIC DNA]</scope>
    <source>
        <strain>ER-3 / ATCC MYA-2586</strain>
    </source>
</reference>
<keyword id="KW-0456">Lyase</keyword>
<proteinExistence type="inferred from homology"/>
<sequence>MSNLNLATLDISEHANLPTSSEVLFKAKADKKLSFESIAAAIGRNEVATAAIFYGQAKASEEDIAKLAQVLEIDHAHLESLLSGFPDRGKSVSFPPKDPLIYRLYEIVQNYGYAYKAVMNEKFGDGIMSAISFSTTVEKETDKDGNNWAVVTWRGKWLPYSRF</sequence>